<dbReference type="EMBL" id="AF076620">
    <property type="protein sequence ID" value="AAC27319.1"/>
    <property type="molecule type" value="mRNA"/>
</dbReference>
<dbReference type="RefSeq" id="NP_001117725.1">
    <property type="nucleotide sequence ID" value="NM_001124253.1"/>
</dbReference>
<dbReference type="SMR" id="O93384"/>
<dbReference type="GeneID" id="100135876"/>
<dbReference type="KEGG" id="omy:100135876"/>
<dbReference type="CTD" id="100135876"/>
<dbReference type="OrthoDB" id="549750at2759"/>
<dbReference type="Proteomes" id="UP000694395">
    <property type="component" value="Unplaced"/>
</dbReference>
<dbReference type="GO" id="GO:0005789">
    <property type="term" value="C:endoplasmic reticulum membrane"/>
    <property type="evidence" value="ECO:0007669"/>
    <property type="project" value="UniProtKB-SubCell"/>
</dbReference>
<dbReference type="GO" id="GO:0005811">
    <property type="term" value="C:lipid droplet"/>
    <property type="evidence" value="ECO:0007669"/>
    <property type="project" value="InterPro"/>
</dbReference>
<dbReference type="GO" id="GO:0005739">
    <property type="term" value="C:mitochondrion"/>
    <property type="evidence" value="ECO:0007669"/>
    <property type="project" value="TreeGrafter"/>
</dbReference>
<dbReference type="GO" id="GO:0051539">
    <property type="term" value="F:4 iron, 4 sulfur cluster binding"/>
    <property type="evidence" value="ECO:0007669"/>
    <property type="project" value="UniProtKB-KW"/>
</dbReference>
<dbReference type="GO" id="GO:0003824">
    <property type="term" value="F:catalytic activity"/>
    <property type="evidence" value="ECO:0007669"/>
    <property type="project" value="InterPro"/>
</dbReference>
<dbReference type="GO" id="GO:0046872">
    <property type="term" value="F:metal ion binding"/>
    <property type="evidence" value="ECO:0007669"/>
    <property type="project" value="UniProtKB-KW"/>
</dbReference>
<dbReference type="GO" id="GO:0051607">
    <property type="term" value="P:defense response to virus"/>
    <property type="evidence" value="ECO:0007669"/>
    <property type="project" value="UniProtKB-KW"/>
</dbReference>
<dbReference type="GO" id="GO:0045087">
    <property type="term" value="P:innate immune response"/>
    <property type="evidence" value="ECO:0007669"/>
    <property type="project" value="UniProtKB-KW"/>
</dbReference>
<dbReference type="GO" id="GO:0050778">
    <property type="term" value="P:positive regulation of immune response"/>
    <property type="evidence" value="ECO:0007669"/>
    <property type="project" value="TreeGrafter"/>
</dbReference>
<dbReference type="CDD" id="cd01335">
    <property type="entry name" value="Radical_SAM"/>
    <property type="match status" value="1"/>
</dbReference>
<dbReference type="Gene3D" id="3.20.20.70">
    <property type="entry name" value="Aldolase class I"/>
    <property type="match status" value="1"/>
</dbReference>
<dbReference type="InterPro" id="IPR013785">
    <property type="entry name" value="Aldolase_TIM"/>
</dbReference>
<dbReference type="InterPro" id="IPR006638">
    <property type="entry name" value="Elp3/MiaA/NifB-like_rSAM"/>
</dbReference>
<dbReference type="InterPro" id="IPR026372">
    <property type="entry name" value="RSAD2"/>
</dbReference>
<dbReference type="InterPro" id="IPR051196">
    <property type="entry name" value="RSAD2/Viperin_antiviral"/>
</dbReference>
<dbReference type="InterPro" id="IPR007197">
    <property type="entry name" value="rSAM"/>
</dbReference>
<dbReference type="NCBIfam" id="TIGR04278">
    <property type="entry name" value="viperin"/>
    <property type="match status" value="1"/>
</dbReference>
<dbReference type="NCBIfam" id="NF038283">
    <property type="entry name" value="viperin_w_prok"/>
    <property type="match status" value="1"/>
</dbReference>
<dbReference type="PANTHER" id="PTHR21339">
    <property type="entry name" value="RADICAL S-ADENOSYL METHIONINE DOMAIN-CONTAINING PROTEIN 2"/>
    <property type="match status" value="1"/>
</dbReference>
<dbReference type="PANTHER" id="PTHR21339:SF0">
    <property type="entry name" value="S-ADENOSYLMETHIONINE-DEPENDENT NUCLEOTIDE DEHYDRATASE RSAD2"/>
    <property type="match status" value="1"/>
</dbReference>
<dbReference type="Pfam" id="PF13353">
    <property type="entry name" value="Fer4_12"/>
    <property type="match status" value="1"/>
</dbReference>
<dbReference type="Pfam" id="PF04055">
    <property type="entry name" value="Radical_SAM"/>
    <property type="match status" value="1"/>
</dbReference>
<dbReference type="SFLD" id="SFLDG01088">
    <property type="entry name" value="antiviral_proteins"/>
    <property type="match status" value="1"/>
</dbReference>
<dbReference type="SFLD" id="SFLDG01067">
    <property type="entry name" value="SPASM/twitch_domain_containing"/>
    <property type="match status" value="1"/>
</dbReference>
<dbReference type="SFLD" id="SFLDF00318">
    <property type="entry name" value="Viperin"/>
    <property type="match status" value="1"/>
</dbReference>
<dbReference type="SMART" id="SM00729">
    <property type="entry name" value="Elp3"/>
    <property type="match status" value="1"/>
</dbReference>
<dbReference type="SUPFAM" id="SSF102114">
    <property type="entry name" value="Radical SAM enzymes"/>
    <property type="match status" value="1"/>
</dbReference>
<dbReference type="PROSITE" id="PS51918">
    <property type="entry name" value="RADICAL_SAM"/>
    <property type="match status" value="1"/>
</dbReference>
<organism>
    <name type="scientific">Oncorhynchus mykiss</name>
    <name type="common">Rainbow trout</name>
    <name type="synonym">Salmo gairdneri</name>
    <dbReference type="NCBI Taxonomy" id="8022"/>
    <lineage>
        <taxon>Eukaryota</taxon>
        <taxon>Metazoa</taxon>
        <taxon>Chordata</taxon>
        <taxon>Craniata</taxon>
        <taxon>Vertebrata</taxon>
        <taxon>Euteleostomi</taxon>
        <taxon>Actinopterygii</taxon>
        <taxon>Neopterygii</taxon>
        <taxon>Teleostei</taxon>
        <taxon>Protacanthopterygii</taxon>
        <taxon>Salmoniformes</taxon>
        <taxon>Salmonidae</taxon>
        <taxon>Salmoninae</taxon>
        <taxon>Oncorhynchus</taxon>
    </lineage>
</organism>
<protein>
    <recommendedName>
        <fullName evidence="6">S-adenosylmethionine-dependent nucleotide dehydratase RSAD2</fullName>
        <shortName evidence="6">SAND</shortName>
    </recommendedName>
    <alternativeName>
        <fullName>Radical S-adenosyl methionine domain-containing protein 2</fullName>
    </alternativeName>
    <alternativeName>
        <fullName>Virus inhibitory protein, endoplasmic reticulum-associated, interferon-inducible</fullName>
        <shortName>Viperin</shortName>
    </alternativeName>
</protein>
<accession>O93384</accession>
<feature type="chain" id="PRO_0000309589" description="S-adenosylmethionine-dependent nucleotide dehydratase RSAD2">
    <location>
        <begin position="1"/>
        <end position="348"/>
    </location>
</feature>
<feature type="domain" description="Radical SAM core" evidence="4">
    <location>
        <begin position="56"/>
        <end position="276"/>
    </location>
</feature>
<feature type="binding site" evidence="3">
    <location>
        <position position="70"/>
    </location>
    <ligand>
        <name>[4Fe-4S] cluster</name>
        <dbReference type="ChEBI" id="CHEBI:49883"/>
        <note>4Fe-4S-S-AdoMet</note>
    </ligand>
</feature>
<feature type="binding site" evidence="3">
    <location>
        <position position="74"/>
    </location>
    <ligand>
        <name>[4Fe-4S] cluster</name>
        <dbReference type="ChEBI" id="CHEBI:49883"/>
        <note>4Fe-4S-S-AdoMet</note>
    </ligand>
</feature>
<feature type="binding site" evidence="3">
    <location>
        <position position="77"/>
    </location>
    <ligand>
        <name>[4Fe-4S] cluster</name>
        <dbReference type="ChEBI" id="CHEBI:49883"/>
        <note>4Fe-4S-S-AdoMet</note>
    </ligand>
</feature>
<keyword id="KW-0004">4Fe-4S</keyword>
<keyword id="KW-0051">Antiviral defense</keyword>
<keyword id="KW-0256">Endoplasmic reticulum</keyword>
<keyword id="KW-0391">Immunity</keyword>
<keyword id="KW-0399">Innate immunity</keyword>
<keyword id="KW-0408">Iron</keyword>
<keyword id="KW-0411">Iron-sulfur</keyword>
<keyword id="KW-0472">Membrane</keyword>
<keyword id="KW-0479">Metal-binding</keyword>
<keyword id="KW-0949">S-adenosyl-L-methionine</keyword>
<gene>
    <name evidence="2" type="primary">rsad2</name>
    <name evidence="8" type="synonym">vig1</name>
</gene>
<name>RSAD2_ONCMY</name>
<comment type="function">
    <text evidence="1">Interferon-inducible iron-sulfur (4FE-4S) cluster-binding antiviral protein which plays a major role in the cell antiviral state induced by type I and type II interferon.</text>
</comment>
<comment type="cofactor">
    <cofactor evidence="3">
        <name>[4Fe-4S] cluster</name>
        <dbReference type="ChEBI" id="CHEBI:49883"/>
    </cofactor>
    <text evidence="3">Binds 1 [4Fe-4S] cluster. The cluster is coordinated with 3 cysteines and an exchangeable S-adenosyl-L-methionine.</text>
</comment>
<comment type="subcellular location">
    <subcellularLocation>
        <location evidence="1">Endoplasmic reticulum membrane</location>
        <topology evidence="1">Peripheral membrane protein</topology>
        <orientation evidence="1">Cytoplasmic side</orientation>
    </subcellularLocation>
</comment>
<comment type="tissue specificity">
    <text evidence="5">Expressed at low levels in spleen and head kidney.</text>
</comment>
<comment type="induction">
    <text evidence="5">By interferon type I, type II and LPS. Induced by infection with viral hemorrhagic septicemia virus (VHSV), presumably through type I interferon pathway.</text>
</comment>
<comment type="similarity">
    <text evidence="7">Belongs to the radical SAM superfamily. RSAD2 family.</text>
</comment>
<evidence type="ECO:0000250" key="1"/>
<evidence type="ECO:0000250" key="2">
    <source>
        <dbReference type="UniProtKB" id="Q5RH95"/>
    </source>
</evidence>
<evidence type="ECO:0000250" key="3">
    <source>
        <dbReference type="UniProtKB" id="Q8CBB9"/>
    </source>
</evidence>
<evidence type="ECO:0000255" key="4">
    <source>
        <dbReference type="PROSITE-ProRule" id="PRU01266"/>
    </source>
</evidence>
<evidence type="ECO:0000269" key="5">
    <source>
    </source>
</evidence>
<evidence type="ECO:0000303" key="6">
    <source>
    </source>
</evidence>
<evidence type="ECO:0000305" key="7"/>
<evidence type="ECO:0000312" key="8">
    <source>
        <dbReference type="EMBL" id="AAC27319.1"/>
    </source>
</evidence>
<sequence>MFLQRCMSFLQCIFAAVLAWIGVRGQQVHGASQFSSTGKVNPATIKVVNNVISQASATPSSVNYHFTRQCNYKCGFCFHTAKTSFVLPIEEAKRGLQLLKESGLEKINFSGGEPFIHDRGDFLGKLVQYCKHDLQLPSVSIVSNGSMIREKWFQTYGEYLDILAISCDSFDEDTNQTIGRAQGRKSHLDNLFKVRDWCRKYKVAFKINSVINTFNVDEDMRENITELNPVRWKVFQCLLIDGENAGENSLREAERFLISDQQFQDFLERHSSISCLVPESNQKMRDSYLILDEYMRFLDCREGRKDPSKSILDVGVEEAIQFSGFDEKMFLKRGGKYVWSKADMRLEW</sequence>
<reference evidence="7 8" key="1">
    <citation type="journal article" date="1999" name="J. Virol.">
        <title>vig-1, a new fish gene induced by the rhabdovirus glycoprotein, has a virus-induced homologue in humans and shares conserved motifs with the MoaA family.</title>
        <authorList>
            <person name="Boudinot P."/>
            <person name="Massin P."/>
            <person name="Blanco M."/>
            <person name="Riffault S."/>
            <person name="Benmansour A."/>
        </authorList>
    </citation>
    <scope>NUCLEOTIDE SEQUENCE [MRNA]</scope>
    <scope>TISSUE SPECIFICITY</scope>
    <scope>INDUCTION</scope>
</reference>
<reference key="2">
    <citation type="journal article" date="2022" name="Front. Mol. Biosci.">
        <title>Radical-SAM dependent nucleotide dehydratase (SAND), rectification of the names of an ancient iron-sulfur enzyme using NC-IUBMB recommendations.</title>
        <authorList>
            <person name="Ji Y."/>
            <person name="Wei L."/>
            <person name="Da A."/>
            <person name="Stark H."/>
            <person name="Hagedoorn P.-L."/>
            <person name="Ciofi-Baffoni S."/>
            <person name="Cowley S.A."/>
            <person name="Louro R.O."/>
            <person name="Todorovic S."/>
            <person name="Mroginski M.A."/>
            <person name="Nicolet Y."/>
            <person name="Roessler M.M."/>
            <person name="Le Brun N.E."/>
            <person name="Piccioli M."/>
            <person name="James W.S."/>
            <person name="Hagen W.R."/>
            <person name="Ebrahimi K.H."/>
        </authorList>
    </citation>
    <scope>NOMENCLATURE</scope>
</reference>
<proteinExistence type="evidence at transcript level"/>